<proteinExistence type="evidence at protein level"/>
<dbReference type="EC" id="1.1.1.-" evidence="10"/>
<dbReference type="EMBL" id="KU923369">
    <property type="protein sequence ID" value="AMU19397.1"/>
    <property type="molecule type" value="Genomic_DNA"/>
</dbReference>
<dbReference type="SMR" id="A0A144Y7G4"/>
<dbReference type="OrthoDB" id="1933717at2759"/>
<dbReference type="GO" id="GO:0016616">
    <property type="term" value="F:oxidoreductase activity, acting on the CH-OH group of donors, NAD or NADP as acceptor"/>
    <property type="evidence" value="ECO:0007669"/>
    <property type="project" value="TreeGrafter"/>
</dbReference>
<dbReference type="CDD" id="cd05233">
    <property type="entry name" value="SDR_c"/>
    <property type="match status" value="1"/>
</dbReference>
<dbReference type="FunFam" id="3.40.50.720:FF:000905">
    <property type="entry name" value="Oxidoreductase, short chain dehydrogenase/reductase family, putative"/>
    <property type="match status" value="1"/>
</dbReference>
<dbReference type="Gene3D" id="3.40.50.720">
    <property type="entry name" value="NAD(P)-binding Rossmann-like Domain"/>
    <property type="match status" value="1"/>
</dbReference>
<dbReference type="InterPro" id="IPR036291">
    <property type="entry name" value="NAD(P)-bd_dom_sf"/>
</dbReference>
<dbReference type="InterPro" id="IPR002347">
    <property type="entry name" value="SDR_fam"/>
</dbReference>
<dbReference type="PANTHER" id="PTHR42760:SF37">
    <property type="entry name" value="CLAVALDEHYDE DEHYDROGENASE"/>
    <property type="match status" value="1"/>
</dbReference>
<dbReference type="PANTHER" id="PTHR42760">
    <property type="entry name" value="SHORT-CHAIN DEHYDROGENASES/REDUCTASES FAMILY MEMBER"/>
    <property type="match status" value="1"/>
</dbReference>
<dbReference type="Pfam" id="PF00106">
    <property type="entry name" value="adh_short"/>
    <property type="match status" value="1"/>
</dbReference>
<dbReference type="PRINTS" id="PR00081">
    <property type="entry name" value="GDHRDH"/>
</dbReference>
<dbReference type="PRINTS" id="PR00080">
    <property type="entry name" value="SDRFAMILY"/>
</dbReference>
<dbReference type="SUPFAM" id="SSF51735">
    <property type="entry name" value="NAD(P)-binding Rossmann-fold domains"/>
    <property type="match status" value="1"/>
</dbReference>
<sequence length="292" mass="31351">MAFPPSAGFTWISKTHNDTYPTITAAKCKQHGRAVFVTGASKGIGRVTAVAFAQAGAPSLALGARSSLDAAETAVLDAAKSAGHPPPQVLKLTLDVADEQSVADAAARVERAFGRLDILVNNAGRVEKWVPLAETDPKSWWATWEVNLKGTYLMTRAMLPLLLKGGEKTIVNMNSIGAHLTRPGASAYQTGKLAMLRLTQFTCVEYAAQGVLAFAIHPGAVDTELASNLPEDTKAKLVDSPELCADTIVWLTQEKQSWLAGRYLSANWDVAELMARKEEILQGDKLKVKLVL</sequence>
<feature type="chain" id="PRO_0000440322" description="Short chain dehydrogenase mpl6">
    <location>
        <begin position="1"/>
        <end position="292"/>
    </location>
</feature>
<feature type="active site" description="Proton donor" evidence="3">
    <location>
        <position position="188"/>
    </location>
</feature>
<feature type="active site" description="Lowers pKa of active site Tyr" evidence="3">
    <location>
        <position position="192"/>
    </location>
</feature>
<feature type="binding site" evidence="2">
    <location>
        <position position="37"/>
    </location>
    <ligand>
        <name>NADP(+)</name>
        <dbReference type="ChEBI" id="CHEBI:58349"/>
    </ligand>
</feature>
<feature type="binding site" evidence="2">
    <location>
        <position position="95"/>
    </location>
    <ligand>
        <name>NADP(+)</name>
        <dbReference type="ChEBI" id="CHEBI:58349"/>
    </ligand>
</feature>
<feature type="binding site" evidence="3">
    <location>
        <position position="122"/>
    </location>
    <ligand>
        <name>NADP(+)</name>
        <dbReference type="ChEBI" id="CHEBI:58349"/>
    </ligand>
</feature>
<feature type="binding site" evidence="2">
    <location>
        <position position="156"/>
    </location>
    <ligand>
        <name>NADP(+)</name>
        <dbReference type="ChEBI" id="CHEBI:58349"/>
    </ligand>
</feature>
<feature type="binding site" evidence="3">
    <location>
        <position position="188"/>
    </location>
    <ligand>
        <name>NADP(+)</name>
        <dbReference type="ChEBI" id="CHEBI:58349"/>
    </ligand>
</feature>
<feature type="binding site" evidence="3">
    <location>
        <position position="192"/>
    </location>
    <ligand>
        <name>NADP(+)</name>
        <dbReference type="ChEBI" id="CHEBI:58349"/>
    </ligand>
</feature>
<feature type="binding site" evidence="3">
    <location>
        <position position="221"/>
    </location>
    <ligand>
        <name>NADP(+)</name>
        <dbReference type="ChEBI" id="CHEBI:58349"/>
    </ligand>
</feature>
<feature type="binding site" evidence="2">
    <location>
        <position position="223"/>
    </location>
    <ligand>
        <name>NADP(+)</name>
        <dbReference type="ChEBI" id="CHEBI:58349"/>
    </ligand>
</feature>
<name>CITE_MONPU</name>
<keyword id="KW-0521">NADP</keyword>
<keyword id="KW-0560">Oxidoreductase</keyword>
<reference key="1">
    <citation type="journal article" date="2017" name="J. Biotechnol.">
        <title>Methylotrophic yeast Pichia pastoris as a chassis organism for polyketide synthesis via the full citrinin biosynthetic pathway.</title>
        <authorList>
            <person name="Xue Y."/>
            <person name="Kong C."/>
            <person name="Shen W."/>
            <person name="Bai C."/>
            <person name="Ren Y."/>
            <person name="Zhou X."/>
            <person name="Zhang Y."/>
            <person name="Cai M."/>
        </authorList>
    </citation>
    <scope>NUCLEOTIDE SEQUENCE [GENOMIC DNA]</scope>
    <scope>FUNCTION</scope>
    <scope>CATALYTIC ACTIVITY</scope>
    <scope>PATHWAY</scope>
</reference>
<reference key="2">
    <citation type="journal article" date="2008" name="J. Agric. Food Chem.">
        <title>Exploring the distribution of citrinin biosynthesis related genes among Monascus species.</title>
        <authorList>
            <person name="Chen Y.P."/>
            <person name="Tseng C.P."/>
            <person name="Chien I.L."/>
            <person name="Wang W.Y."/>
            <person name="Liaw L.L."/>
            <person name="Yuan G.F."/>
        </authorList>
    </citation>
    <scope>FUNCTION</scope>
</reference>
<reference key="3">
    <citation type="journal article" date="2008" name="J. Biosci. Bioeng.">
        <title>Construction of a citrinin gene cluster expression system in heterologous Aspergillus oryzae.</title>
        <authorList>
            <person name="Sakai K."/>
            <person name="Kinoshita H."/>
            <person name="Shimizu T."/>
            <person name="Nihira T."/>
        </authorList>
    </citation>
    <scope>FUNCTION</scope>
</reference>
<reference key="4">
    <citation type="journal article" date="2017" name="Cell Chem. Biol.">
        <title>Functional and structural analysis of programmed C-methylation in the biosynthesis of the fungal polyketide citrinin.</title>
        <authorList>
            <person name="Storm P.A."/>
            <person name="Herbst D.A."/>
            <person name="Maier T."/>
            <person name="Townsend C.A."/>
        </authorList>
    </citation>
    <scope>FUNCTION</scope>
</reference>
<accession>A0A144Y7G4</accession>
<gene>
    <name evidence="8" type="primary">mpl6</name>
</gene>
<organism>
    <name type="scientific">Monascus purpureus</name>
    <name type="common">Red mold</name>
    <name type="synonym">Monascus anka</name>
    <dbReference type="NCBI Taxonomy" id="5098"/>
    <lineage>
        <taxon>Eukaryota</taxon>
        <taxon>Fungi</taxon>
        <taxon>Dikarya</taxon>
        <taxon>Ascomycota</taxon>
        <taxon>Pezizomycotina</taxon>
        <taxon>Eurotiomycetes</taxon>
        <taxon>Eurotiomycetidae</taxon>
        <taxon>Eurotiales</taxon>
        <taxon>Aspergillaceae</taxon>
        <taxon>Monascus</taxon>
    </lineage>
</organism>
<evidence type="ECO:0000250" key="1">
    <source>
        <dbReference type="UniProtKB" id="A0A161CKG1"/>
    </source>
</evidence>
<evidence type="ECO:0000250" key="2">
    <source>
        <dbReference type="UniProtKB" id="L0E2Z4"/>
    </source>
</evidence>
<evidence type="ECO:0000250" key="3">
    <source>
        <dbReference type="UniProtKB" id="O93868"/>
    </source>
</evidence>
<evidence type="ECO:0000269" key="4">
    <source>
    </source>
</evidence>
<evidence type="ECO:0000269" key="5">
    <source>
    </source>
</evidence>
<evidence type="ECO:0000269" key="6">
    <source>
    </source>
</evidence>
<evidence type="ECO:0000269" key="7">
    <source>
    </source>
</evidence>
<evidence type="ECO:0000303" key="8">
    <source>
    </source>
</evidence>
<evidence type="ECO:0000305" key="9"/>
<evidence type="ECO:0000305" key="10">
    <source>
    </source>
</evidence>
<protein>
    <recommendedName>
        <fullName evidence="8">Short chain dehydrogenase mpl6</fullName>
        <ecNumber evidence="10">1.1.1.-</ecNumber>
    </recommendedName>
    <alternativeName>
        <fullName evidence="8">Citrinin synthesis protein mpl6</fullName>
    </alternativeName>
</protein>
<comment type="function">
    <text evidence="1 4 5 6 7">Short chain dehydrogenase; part of the gene cluster that mediates the biosynthesis of the mycotoxin citrinin, a hepato-nephrotoxic compound to humans due to inhibition of respiration complex III (PubMed:19012408, PubMed:19111642, PubMed:27913218, PubMed:28238725). The pathway begins with the synthesis of a keto-aldehyde intermediate by the citrinin PKS (pksCT) from successive condensations of 4 malonyl-CoA units, presumably with a simple acetyl-CoA starter unit (PubMed:28238725). Release of the keto-aldehyde intermediate is consistent with the presence of the C-terminal reductive release domain (PubMed:28238725). Mp11 collaborates with pksCT by catalyzing the hydrolysis of ACP-bound acyl intermediates to free the ACP from stalled intermediates (By similarity). Mpl2 then catalyzes the oxidation of the C-12 methyl of the ketone intermediate to an alcohol intermediate which is further oxidized by the oxidoreductase mpl7 to produce a bisaldehyde intermediate (PubMed:27913218). The fourth catalytic step is catalyzed by the mpl4 aldehyde dehydrogenase (PubMed:27913218). The final transformation is the reduction of C-3 by mpl6 to provide the chemically stable citrinin nucleus (PubMed:27913218).</text>
</comment>
<comment type="pathway">
    <text evidence="6">Mycotoxin biosynthesis.</text>
</comment>
<comment type="similarity">
    <text evidence="9">Belongs to the short-chain dehydrogenases/reductases (SDR) family.</text>
</comment>